<dbReference type="EMBL" id="CU928145">
    <property type="protein sequence ID" value="CAU99987.1"/>
    <property type="molecule type" value="Genomic_DNA"/>
</dbReference>
<dbReference type="RefSeq" id="WP_000022439.1">
    <property type="nucleotide sequence ID" value="NC_011748.1"/>
</dbReference>
<dbReference type="SMR" id="B7LHZ2"/>
<dbReference type="GeneID" id="93778697"/>
<dbReference type="KEGG" id="eck:EC55989_3707"/>
<dbReference type="HOGENOM" id="CLU_095787_0_0_6"/>
<dbReference type="Proteomes" id="UP000000746">
    <property type="component" value="Chromosome"/>
</dbReference>
<dbReference type="GO" id="GO:0005886">
    <property type="term" value="C:plasma membrane"/>
    <property type="evidence" value="ECO:0007669"/>
    <property type="project" value="UniProtKB-SubCell"/>
</dbReference>
<dbReference type="GO" id="GO:0008381">
    <property type="term" value="F:mechanosensitive monoatomic ion channel activity"/>
    <property type="evidence" value="ECO:0007669"/>
    <property type="project" value="UniProtKB-UniRule"/>
</dbReference>
<dbReference type="FunFam" id="1.10.1200.120:FF:000001">
    <property type="entry name" value="Large-conductance mechanosensitive channel"/>
    <property type="match status" value="1"/>
</dbReference>
<dbReference type="Gene3D" id="1.10.1200.120">
    <property type="entry name" value="Large-conductance mechanosensitive channel, MscL, domain 1"/>
    <property type="match status" value="1"/>
</dbReference>
<dbReference type="HAMAP" id="MF_00115">
    <property type="entry name" value="MscL"/>
    <property type="match status" value="1"/>
</dbReference>
<dbReference type="InterPro" id="IPR019823">
    <property type="entry name" value="Mechanosensitive_channel_CS"/>
</dbReference>
<dbReference type="InterPro" id="IPR001185">
    <property type="entry name" value="MS_channel"/>
</dbReference>
<dbReference type="InterPro" id="IPR037673">
    <property type="entry name" value="MSC/AndL"/>
</dbReference>
<dbReference type="InterPro" id="IPR036019">
    <property type="entry name" value="MscL_channel"/>
</dbReference>
<dbReference type="NCBIfam" id="TIGR00220">
    <property type="entry name" value="mscL"/>
    <property type="match status" value="1"/>
</dbReference>
<dbReference type="NCBIfam" id="NF001841">
    <property type="entry name" value="PRK00567.1-1"/>
    <property type="match status" value="1"/>
</dbReference>
<dbReference type="NCBIfam" id="NF001843">
    <property type="entry name" value="PRK00567.1-4"/>
    <property type="match status" value="1"/>
</dbReference>
<dbReference type="PANTHER" id="PTHR30266:SF2">
    <property type="entry name" value="LARGE-CONDUCTANCE MECHANOSENSITIVE CHANNEL"/>
    <property type="match status" value="1"/>
</dbReference>
<dbReference type="PANTHER" id="PTHR30266">
    <property type="entry name" value="MECHANOSENSITIVE CHANNEL MSCL"/>
    <property type="match status" value="1"/>
</dbReference>
<dbReference type="Pfam" id="PF01741">
    <property type="entry name" value="MscL"/>
    <property type="match status" value="1"/>
</dbReference>
<dbReference type="PRINTS" id="PR01264">
    <property type="entry name" value="MECHCHANNEL"/>
</dbReference>
<dbReference type="SUPFAM" id="SSF81330">
    <property type="entry name" value="Gated mechanosensitive channel"/>
    <property type="match status" value="1"/>
</dbReference>
<dbReference type="PROSITE" id="PS01327">
    <property type="entry name" value="MSCL"/>
    <property type="match status" value="1"/>
</dbReference>
<gene>
    <name evidence="1" type="primary">mscL</name>
    <name type="ordered locus">EC55989_3707</name>
</gene>
<accession>B7LHZ2</accession>
<reference key="1">
    <citation type="journal article" date="2009" name="PLoS Genet.">
        <title>Organised genome dynamics in the Escherichia coli species results in highly diverse adaptive paths.</title>
        <authorList>
            <person name="Touchon M."/>
            <person name="Hoede C."/>
            <person name="Tenaillon O."/>
            <person name="Barbe V."/>
            <person name="Baeriswyl S."/>
            <person name="Bidet P."/>
            <person name="Bingen E."/>
            <person name="Bonacorsi S."/>
            <person name="Bouchier C."/>
            <person name="Bouvet O."/>
            <person name="Calteau A."/>
            <person name="Chiapello H."/>
            <person name="Clermont O."/>
            <person name="Cruveiller S."/>
            <person name="Danchin A."/>
            <person name="Diard M."/>
            <person name="Dossat C."/>
            <person name="Karoui M.E."/>
            <person name="Frapy E."/>
            <person name="Garry L."/>
            <person name="Ghigo J.M."/>
            <person name="Gilles A.M."/>
            <person name="Johnson J."/>
            <person name="Le Bouguenec C."/>
            <person name="Lescat M."/>
            <person name="Mangenot S."/>
            <person name="Martinez-Jehanne V."/>
            <person name="Matic I."/>
            <person name="Nassif X."/>
            <person name="Oztas S."/>
            <person name="Petit M.A."/>
            <person name="Pichon C."/>
            <person name="Rouy Z."/>
            <person name="Ruf C.S."/>
            <person name="Schneider D."/>
            <person name="Tourret J."/>
            <person name="Vacherie B."/>
            <person name="Vallenet D."/>
            <person name="Medigue C."/>
            <person name="Rocha E.P.C."/>
            <person name="Denamur E."/>
        </authorList>
    </citation>
    <scope>NUCLEOTIDE SEQUENCE [LARGE SCALE GENOMIC DNA]</scope>
    <source>
        <strain>55989 / EAEC</strain>
    </source>
</reference>
<keyword id="KW-0997">Cell inner membrane</keyword>
<keyword id="KW-1003">Cell membrane</keyword>
<keyword id="KW-0407">Ion channel</keyword>
<keyword id="KW-0406">Ion transport</keyword>
<keyword id="KW-0472">Membrane</keyword>
<keyword id="KW-1185">Reference proteome</keyword>
<keyword id="KW-0812">Transmembrane</keyword>
<keyword id="KW-1133">Transmembrane helix</keyword>
<keyword id="KW-0813">Transport</keyword>
<name>MSCL_ECO55</name>
<protein>
    <recommendedName>
        <fullName evidence="1">Large-conductance mechanosensitive channel</fullName>
    </recommendedName>
</protein>
<comment type="function">
    <text evidence="1">Channel that opens in response to stretch forces in the membrane lipid bilayer. May participate in the regulation of osmotic pressure changes within the cell.</text>
</comment>
<comment type="subunit">
    <text evidence="1">Homopentamer.</text>
</comment>
<comment type="subcellular location">
    <subcellularLocation>
        <location evidence="1">Cell inner membrane</location>
        <topology evidence="1">Multi-pass membrane protein</topology>
    </subcellularLocation>
</comment>
<comment type="similarity">
    <text evidence="1">Belongs to the MscL family.</text>
</comment>
<feature type="chain" id="PRO_1000191364" description="Large-conductance mechanosensitive channel">
    <location>
        <begin position="1"/>
        <end position="136"/>
    </location>
</feature>
<feature type="transmembrane region" description="Helical" evidence="1">
    <location>
        <begin position="10"/>
        <end position="30"/>
    </location>
</feature>
<feature type="transmembrane region" description="Helical" evidence="1">
    <location>
        <begin position="76"/>
        <end position="96"/>
    </location>
</feature>
<sequence length="136" mass="14927">MSIIKEFREFAMRGNVVDLAVGVIIGAAFGKIVSSLVADIIMPPLGLLIGGIDFKQFAVTLRDAQGDIPAVVMHYGVFIQNVFDFLIVAFAIFMAIKLINKLNRKKEEPAAAPAPTKEEVLLAEIRDLLKEQNNRS</sequence>
<evidence type="ECO:0000255" key="1">
    <source>
        <dbReference type="HAMAP-Rule" id="MF_00115"/>
    </source>
</evidence>
<organism>
    <name type="scientific">Escherichia coli (strain 55989 / EAEC)</name>
    <dbReference type="NCBI Taxonomy" id="585055"/>
    <lineage>
        <taxon>Bacteria</taxon>
        <taxon>Pseudomonadati</taxon>
        <taxon>Pseudomonadota</taxon>
        <taxon>Gammaproteobacteria</taxon>
        <taxon>Enterobacterales</taxon>
        <taxon>Enterobacteriaceae</taxon>
        <taxon>Escherichia</taxon>
    </lineage>
</organism>
<proteinExistence type="inferred from homology"/>